<accession>Q68W71</accession>
<organism>
    <name type="scientific">Rickettsia typhi (strain ATCC VR-144 / Wilmington)</name>
    <dbReference type="NCBI Taxonomy" id="257363"/>
    <lineage>
        <taxon>Bacteria</taxon>
        <taxon>Pseudomonadati</taxon>
        <taxon>Pseudomonadota</taxon>
        <taxon>Alphaproteobacteria</taxon>
        <taxon>Rickettsiales</taxon>
        <taxon>Rickettsiaceae</taxon>
        <taxon>Rickettsieae</taxon>
        <taxon>Rickettsia</taxon>
        <taxon>typhus group</taxon>
    </lineage>
</organism>
<feature type="chain" id="PRO_0000281103" description="Putative transporter AmpG 2">
    <location>
        <begin position="1"/>
        <end position="408"/>
    </location>
</feature>
<feature type="transmembrane region" description="Helical" evidence="2">
    <location>
        <begin position="11"/>
        <end position="31"/>
    </location>
</feature>
<feature type="transmembrane region" description="Helical" evidence="2">
    <location>
        <begin position="49"/>
        <end position="69"/>
    </location>
</feature>
<feature type="transmembrane region" description="Helical" evidence="2">
    <location>
        <begin position="84"/>
        <end position="104"/>
    </location>
</feature>
<feature type="transmembrane region" description="Helical" evidence="2">
    <location>
        <begin position="110"/>
        <end position="130"/>
    </location>
</feature>
<feature type="transmembrane region" description="Helical" evidence="2">
    <location>
        <begin position="154"/>
        <end position="174"/>
    </location>
</feature>
<feature type="transmembrane region" description="Helical" evidence="2">
    <location>
        <begin position="177"/>
        <end position="197"/>
    </location>
</feature>
<feature type="transmembrane region" description="Helical" evidence="2">
    <location>
        <begin position="224"/>
        <end position="244"/>
    </location>
</feature>
<feature type="transmembrane region" description="Helical" evidence="2">
    <location>
        <begin position="261"/>
        <end position="281"/>
    </location>
</feature>
<feature type="transmembrane region" description="Helical" evidence="2">
    <location>
        <begin position="294"/>
        <end position="311"/>
    </location>
</feature>
<feature type="transmembrane region" description="Helical" evidence="2">
    <location>
        <begin position="315"/>
        <end position="337"/>
    </location>
</feature>
<feature type="transmembrane region" description="Helical" evidence="2">
    <location>
        <begin position="353"/>
        <end position="373"/>
    </location>
</feature>
<feature type="transmembrane region" description="Helical" evidence="2">
    <location>
        <begin position="382"/>
        <end position="402"/>
    </location>
</feature>
<protein>
    <recommendedName>
        <fullName>Putative transporter AmpG 2</fullName>
    </recommendedName>
</protein>
<name>AMPG2_RICTY</name>
<keyword id="KW-0997">Cell inner membrane</keyword>
<keyword id="KW-1003">Cell membrane</keyword>
<keyword id="KW-0472">Membrane</keyword>
<keyword id="KW-0812">Transmembrane</keyword>
<keyword id="KW-1133">Transmembrane helix</keyword>
<keyword id="KW-0813">Transport</keyword>
<comment type="subcellular location">
    <subcellularLocation>
        <location evidence="1">Cell inner membrane</location>
        <topology evidence="1">Multi-pass membrane protein</topology>
    </subcellularLocation>
</comment>
<comment type="similarity">
    <text evidence="3">Belongs to the major facilitator superfamily.</text>
</comment>
<proteinExistence type="inferred from homology"/>
<sequence>MNFKCVQFQSIFNILFILIISFPGGLIYLLTGSTLSFWLRESEFDKITIGLFGLVNFIYILKFLWGPLLEKISFSTLSNRGYKYCLVITLINCIVCVYVLTSFNPNTNFTPFVLCLIVLAFFSSIYDMLIQSSQMLLITDKNWGISEAACTTGFRIGILISGSGALYLSTIISWQDVYRTMAILCIPSLLLIIFYPLKFKDKMIANDFDKFFSAFYDFIKKPKWIVIISFMLLYRLQDSFLSIMPNMFYLDIGYTKQDLAIGYKAFGMCAAIFGGVIGGFLCRKYEYSYLLKRVLIYHALSSLSFIYLYFLNQDIISLYIAVFCQEFTKGLTMSPFFSYQLKCCSSRYCITQIALITSITNVGTILIGSISGYAATYLGWSYFFIVAGLCFIPAYILILYLPKTINSV</sequence>
<gene>
    <name type="primary">ampG2</name>
    <name type="ordered locus">RT0660</name>
</gene>
<reference key="1">
    <citation type="journal article" date="2004" name="J. Bacteriol.">
        <title>Complete genome sequence of Rickettsia typhi and comparison with sequences of other Rickettsiae.</title>
        <authorList>
            <person name="McLeod M.P."/>
            <person name="Qin X."/>
            <person name="Karpathy S.E."/>
            <person name="Gioia J."/>
            <person name="Highlander S.K."/>
            <person name="Fox G.E."/>
            <person name="McNeill T.Z."/>
            <person name="Jiang H."/>
            <person name="Muzny D."/>
            <person name="Jacob L.S."/>
            <person name="Hawes A.C."/>
            <person name="Sodergren E."/>
            <person name="Gill R."/>
            <person name="Hume J."/>
            <person name="Morgan M."/>
            <person name="Fan G."/>
            <person name="Amin A.G."/>
            <person name="Gibbs R.A."/>
            <person name="Hong C."/>
            <person name="Yu X.-J."/>
            <person name="Walker D.H."/>
            <person name="Weinstock G.M."/>
        </authorList>
    </citation>
    <scope>NUCLEOTIDE SEQUENCE [LARGE SCALE GENOMIC DNA]</scope>
    <source>
        <strain>ATCC VR-144 / Wilmington</strain>
    </source>
</reference>
<evidence type="ECO:0000250" key="1"/>
<evidence type="ECO:0000255" key="2"/>
<evidence type="ECO:0000305" key="3"/>
<dbReference type="EMBL" id="AE017197">
    <property type="protein sequence ID" value="AAU04121.1"/>
    <property type="molecule type" value="Genomic_DNA"/>
</dbReference>
<dbReference type="SMR" id="Q68W71"/>
<dbReference type="KEGG" id="rty:RT0660"/>
<dbReference type="eggNOG" id="COG2271">
    <property type="taxonomic scope" value="Bacteria"/>
</dbReference>
<dbReference type="HOGENOM" id="CLU_029352_1_2_5"/>
<dbReference type="OrthoDB" id="9787815at2"/>
<dbReference type="Proteomes" id="UP000000604">
    <property type="component" value="Chromosome"/>
</dbReference>
<dbReference type="GO" id="GO:0005886">
    <property type="term" value="C:plasma membrane"/>
    <property type="evidence" value="ECO:0007669"/>
    <property type="project" value="UniProtKB-SubCell"/>
</dbReference>
<dbReference type="GO" id="GO:0022857">
    <property type="term" value="F:transmembrane transporter activity"/>
    <property type="evidence" value="ECO:0007669"/>
    <property type="project" value="InterPro"/>
</dbReference>
<dbReference type="CDD" id="cd17486">
    <property type="entry name" value="MFS_AmpG_like"/>
    <property type="match status" value="1"/>
</dbReference>
<dbReference type="Gene3D" id="1.20.1250.20">
    <property type="entry name" value="MFS general substrate transporter like domains"/>
    <property type="match status" value="2"/>
</dbReference>
<dbReference type="InterPro" id="IPR004752">
    <property type="entry name" value="AmpG_permease/AT-1"/>
</dbReference>
<dbReference type="InterPro" id="IPR011701">
    <property type="entry name" value="MFS"/>
</dbReference>
<dbReference type="InterPro" id="IPR036259">
    <property type="entry name" value="MFS_trans_sf"/>
</dbReference>
<dbReference type="PANTHER" id="PTHR12778:SF10">
    <property type="entry name" value="MAJOR FACILITATOR SUPERFAMILY DOMAIN-CONTAINING PROTEIN 3"/>
    <property type="match status" value="1"/>
</dbReference>
<dbReference type="PANTHER" id="PTHR12778">
    <property type="entry name" value="SOLUTE CARRIER FAMILY 33 ACETYL-COA TRANSPORTER -RELATED"/>
    <property type="match status" value="1"/>
</dbReference>
<dbReference type="Pfam" id="PF07690">
    <property type="entry name" value="MFS_1"/>
    <property type="match status" value="1"/>
</dbReference>
<dbReference type="SUPFAM" id="SSF103473">
    <property type="entry name" value="MFS general substrate transporter"/>
    <property type="match status" value="1"/>
</dbReference>